<organism>
    <name type="scientific">Mus musculus</name>
    <name type="common">Mouse</name>
    <dbReference type="NCBI Taxonomy" id="10090"/>
    <lineage>
        <taxon>Eukaryota</taxon>
        <taxon>Metazoa</taxon>
        <taxon>Chordata</taxon>
        <taxon>Craniata</taxon>
        <taxon>Vertebrata</taxon>
        <taxon>Euteleostomi</taxon>
        <taxon>Mammalia</taxon>
        <taxon>Eutheria</taxon>
        <taxon>Euarchontoglires</taxon>
        <taxon>Glires</taxon>
        <taxon>Rodentia</taxon>
        <taxon>Myomorpha</taxon>
        <taxon>Muroidea</taxon>
        <taxon>Muridae</taxon>
        <taxon>Murinae</taxon>
        <taxon>Mus</taxon>
        <taxon>Mus</taxon>
    </lineage>
</organism>
<comment type="function">
    <text>The muscarinic acetylcholine receptor mediates various cellular responses, including inhibition of adenylate cyclase, breakdown of phosphoinositides and modulation of potassium channels through the action of G proteins. Primary transducing effect is Pi turnover.</text>
</comment>
<comment type="subunit">
    <text evidence="2">Interacts with GPRASP2 (By similarity). Interacts with TMEM147 (By similarity).</text>
</comment>
<comment type="subcellular location">
    <subcellularLocation>
        <location>Cell membrane</location>
        <topology>Multi-pass membrane protein</topology>
    </subcellularLocation>
    <subcellularLocation>
        <location>Postsynaptic cell membrane</location>
        <topology>Multi-pass membrane protein</topology>
    </subcellularLocation>
</comment>
<comment type="similarity">
    <text evidence="5">Belongs to the G-protein coupled receptor 1 family. Muscarinic acetylcholine receptor subfamily. CHRM1 sub-subfamily.</text>
</comment>
<gene>
    <name type="primary">Chrm1</name>
    <name type="synonym">Chrm-1</name>
</gene>
<proteinExistence type="evidence at protein level"/>
<protein>
    <recommendedName>
        <fullName>Muscarinic acetylcholine receptor M1</fullName>
    </recommendedName>
</protein>
<accession>P12657</accession>
<accession>Q52KQ0</accession>
<accession>Q8BJN3</accession>
<name>ACM1_MOUSE</name>
<evidence type="ECO:0000250" key="1">
    <source>
        <dbReference type="UniProtKB" id="P08482"/>
    </source>
</evidence>
<evidence type="ECO:0000250" key="2">
    <source>
        <dbReference type="UniProtKB" id="P11229"/>
    </source>
</evidence>
<evidence type="ECO:0000255" key="3"/>
<evidence type="ECO:0000255" key="4">
    <source>
        <dbReference type="PROSITE-ProRule" id="PRU00498"/>
    </source>
</evidence>
<evidence type="ECO:0000255" key="5">
    <source>
        <dbReference type="PROSITE-ProRule" id="PRU00521"/>
    </source>
</evidence>
<evidence type="ECO:0000256" key="6">
    <source>
        <dbReference type="SAM" id="MobiDB-lite"/>
    </source>
</evidence>
<evidence type="ECO:0000305" key="7"/>
<evidence type="ECO:0007744" key="8">
    <source>
    </source>
</evidence>
<sequence length="460" mass="51379">MNTSVPPAVSPNITVLAPGKGPWQVAFIGITTGLLSLATVTGNLLVLISFKVNTELKTVNNYFLLSLACADLIIGTFSMNLYTTYLLMGHWALGTLACDLWLALDYVASNASVMNLLLISFDRYFSVTRPLSYRAKRTPRRAALMIGLAWLVSFVLWAPAILFWQYLVGERTVLAGQCYIQFLSQPIITFGTAMAAFYLPVTVMCTLYWRIYRETENRARELAALQGSETPGKGGGSSSSSERSQPGAEGSPESPPGRCCRCCRAPRLLQAYSWKEEEEEDEGSMESLTSSEGEEPGSEVVIKMPMVDPEAQAPTKQPPKSSPNTVKRPTKKGRDRGGKGQKPRGKEQLAKRKTFSLVKEKKAARTLSAILLAFILTWTPYNIMVLVSTFCKDCVPETLWELGYWLCYVNSTVNPMCYALCNKAFRDTFRLLLLCRWDKRRWRKIPKRPGSVHRTPSRQC</sequence>
<dbReference type="EMBL" id="J04192">
    <property type="protein sequence ID" value="AAA37158.1"/>
    <property type="molecule type" value="Genomic_DNA"/>
</dbReference>
<dbReference type="EMBL" id="AK081248">
    <property type="protein sequence ID" value="BAC38175.1"/>
    <property type="molecule type" value="mRNA"/>
</dbReference>
<dbReference type="EMBL" id="AK138282">
    <property type="protein sequence ID" value="BAE23612.1"/>
    <property type="molecule type" value="mRNA"/>
</dbReference>
<dbReference type="EMBL" id="AC025794">
    <property type="status" value="NOT_ANNOTATED_CDS"/>
    <property type="molecule type" value="Genomic_DNA"/>
</dbReference>
<dbReference type="EMBL" id="CH466612">
    <property type="protein sequence ID" value="EDL33348.1"/>
    <property type="molecule type" value="Genomic_DNA"/>
</dbReference>
<dbReference type="EMBL" id="CH466612">
    <property type="protein sequence ID" value="EDL33349.1"/>
    <property type="molecule type" value="Genomic_DNA"/>
</dbReference>
<dbReference type="EMBL" id="BC094242">
    <property type="protein sequence ID" value="AAH94242.1"/>
    <property type="molecule type" value="mRNA"/>
</dbReference>
<dbReference type="CCDS" id="CCDS29539.1"/>
<dbReference type="PIR" id="A31897">
    <property type="entry name" value="A31897"/>
</dbReference>
<dbReference type="RefSeq" id="NP_001106167.1">
    <property type="nucleotide sequence ID" value="NM_001112697.1"/>
</dbReference>
<dbReference type="RefSeq" id="NP_031724.2">
    <property type="nucleotide sequence ID" value="NM_007698.3"/>
</dbReference>
<dbReference type="SMR" id="P12657"/>
<dbReference type="CORUM" id="P12657"/>
<dbReference type="FunCoup" id="P12657">
    <property type="interactions" value="1046"/>
</dbReference>
<dbReference type="STRING" id="10090.ENSMUSP00000126103"/>
<dbReference type="BindingDB" id="P12657"/>
<dbReference type="ChEMBL" id="CHEMBL3733"/>
<dbReference type="DrugCentral" id="P12657"/>
<dbReference type="GuidetoPHARMACOLOGY" id="13"/>
<dbReference type="TCDB" id="9.A.14.3.2">
    <property type="family name" value="the g-protein-coupled receptor (gpcr) family"/>
</dbReference>
<dbReference type="GlyCosmos" id="P12657">
    <property type="glycosylation" value="2 sites, No reported glycans"/>
</dbReference>
<dbReference type="GlyGen" id="P12657">
    <property type="glycosylation" value="2 sites"/>
</dbReference>
<dbReference type="iPTMnet" id="P12657"/>
<dbReference type="PhosphoSitePlus" id="P12657"/>
<dbReference type="SwissPalm" id="P12657"/>
<dbReference type="PaxDb" id="10090-ENSMUSP00000042632"/>
<dbReference type="ProteomicsDB" id="285586"/>
<dbReference type="Antibodypedia" id="2948">
    <property type="antibodies" value="320 antibodies from 36 providers"/>
</dbReference>
<dbReference type="DNASU" id="12669"/>
<dbReference type="Ensembl" id="ENSMUST00000035444.10">
    <property type="protein sequence ID" value="ENSMUSP00000042632.4"/>
    <property type="gene ID" value="ENSMUSG00000032773.10"/>
</dbReference>
<dbReference type="Ensembl" id="ENSMUST00000163785.2">
    <property type="protein sequence ID" value="ENSMUSP00000126103.2"/>
    <property type="gene ID" value="ENSMUSG00000032773.10"/>
</dbReference>
<dbReference type="GeneID" id="12669"/>
<dbReference type="KEGG" id="mmu:12669"/>
<dbReference type="UCSC" id="uc008gmf.2">
    <property type="organism name" value="mouse"/>
</dbReference>
<dbReference type="AGR" id="MGI:88396"/>
<dbReference type="CTD" id="1128"/>
<dbReference type="MGI" id="MGI:88396">
    <property type="gene designation" value="Chrm1"/>
</dbReference>
<dbReference type="VEuPathDB" id="HostDB:ENSMUSG00000032773"/>
<dbReference type="eggNOG" id="KOG4220">
    <property type="taxonomic scope" value="Eukaryota"/>
</dbReference>
<dbReference type="GeneTree" id="ENSGT00940000162301"/>
<dbReference type="HOGENOM" id="CLU_009579_11_2_1"/>
<dbReference type="InParanoid" id="P12657"/>
<dbReference type="OMA" id="CCCWGPR"/>
<dbReference type="OrthoDB" id="10071887at2759"/>
<dbReference type="PhylomeDB" id="P12657"/>
<dbReference type="TreeFam" id="TF320495"/>
<dbReference type="Reactome" id="R-MMU-390648">
    <property type="pathway name" value="Muscarinic acetylcholine receptors"/>
</dbReference>
<dbReference type="Reactome" id="R-MMU-416476">
    <property type="pathway name" value="G alpha (q) signalling events"/>
</dbReference>
<dbReference type="BioGRID-ORCS" id="12669">
    <property type="hits" value="2 hits in 76 CRISPR screens"/>
</dbReference>
<dbReference type="CD-CODE" id="CE726F99">
    <property type="entry name" value="Postsynaptic density"/>
</dbReference>
<dbReference type="ChiTaRS" id="Chrm1">
    <property type="organism name" value="mouse"/>
</dbReference>
<dbReference type="PRO" id="PR:P12657"/>
<dbReference type="Proteomes" id="UP000000589">
    <property type="component" value="Chromosome 19"/>
</dbReference>
<dbReference type="RNAct" id="P12657">
    <property type="molecule type" value="protein"/>
</dbReference>
<dbReference type="Bgee" id="ENSMUSG00000032773">
    <property type="expression patterns" value="Expressed in dentate gyrus of hippocampal formation granule cell and 88 other cell types or tissues"/>
</dbReference>
<dbReference type="ExpressionAtlas" id="P12657">
    <property type="expression patterns" value="baseline and differential"/>
</dbReference>
<dbReference type="GO" id="GO:0043679">
    <property type="term" value="C:axon terminus"/>
    <property type="evidence" value="ECO:0007669"/>
    <property type="project" value="Ensembl"/>
</dbReference>
<dbReference type="GO" id="GO:0098981">
    <property type="term" value="C:cholinergic synapse"/>
    <property type="evidence" value="ECO:0000314"/>
    <property type="project" value="SynGO"/>
</dbReference>
<dbReference type="GO" id="GO:0030425">
    <property type="term" value="C:dendrite"/>
    <property type="evidence" value="ECO:0007669"/>
    <property type="project" value="Ensembl"/>
</dbReference>
<dbReference type="GO" id="GO:0098978">
    <property type="term" value="C:glutamatergic synapse"/>
    <property type="evidence" value="ECO:0007669"/>
    <property type="project" value="Ensembl"/>
</dbReference>
<dbReference type="GO" id="GO:0098839">
    <property type="term" value="C:postsynaptic density membrane"/>
    <property type="evidence" value="ECO:0007669"/>
    <property type="project" value="Ensembl"/>
</dbReference>
<dbReference type="GO" id="GO:0045211">
    <property type="term" value="C:postsynaptic membrane"/>
    <property type="evidence" value="ECO:0000314"/>
    <property type="project" value="SynGO"/>
</dbReference>
<dbReference type="GO" id="GO:0042734">
    <property type="term" value="C:presynaptic membrane"/>
    <property type="evidence" value="ECO:0007669"/>
    <property type="project" value="Ensembl"/>
</dbReference>
<dbReference type="GO" id="GO:0098685">
    <property type="term" value="C:Schaffer collateral - CA1 synapse"/>
    <property type="evidence" value="ECO:0000314"/>
    <property type="project" value="SynGO"/>
</dbReference>
<dbReference type="GO" id="GO:0016907">
    <property type="term" value="F:G protein-coupled acetylcholine receptor activity"/>
    <property type="evidence" value="ECO:0007669"/>
    <property type="project" value="Ensembl"/>
</dbReference>
<dbReference type="GO" id="GO:0050890">
    <property type="term" value="P:cognition"/>
    <property type="evidence" value="ECO:0007669"/>
    <property type="project" value="InterPro"/>
</dbReference>
<dbReference type="GO" id="GO:0007274">
    <property type="term" value="P:neuromuscular synaptic transmission"/>
    <property type="evidence" value="ECO:0007669"/>
    <property type="project" value="Ensembl"/>
</dbReference>
<dbReference type="GO" id="GO:0090316">
    <property type="term" value="P:positive regulation of intracellular protein transport"/>
    <property type="evidence" value="ECO:0007669"/>
    <property type="project" value="Ensembl"/>
</dbReference>
<dbReference type="GO" id="GO:0043270">
    <property type="term" value="P:positive regulation of monoatomic ion transport"/>
    <property type="evidence" value="ECO:0000266"/>
    <property type="project" value="MGI"/>
</dbReference>
<dbReference type="GO" id="GO:0099170">
    <property type="term" value="P:postsynaptic modulation of chemical synaptic transmission"/>
    <property type="evidence" value="ECO:0000314"/>
    <property type="project" value="SynGO"/>
</dbReference>
<dbReference type="GO" id="GO:0040012">
    <property type="term" value="P:regulation of locomotion"/>
    <property type="evidence" value="ECO:0000315"/>
    <property type="project" value="MGI"/>
</dbReference>
<dbReference type="GO" id="GO:0060078">
    <property type="term" value="P:regulation of postsynaptic membrane potential"/>
    <property type="evidence" value="ECO:0000314"/>
    <property type="project" value="SynGO"/>
</dbReference>
<dbReference type="GO" id="GO:0046541">
    <property type="term" value="P:saliva secretion"/>
    <property type="evidence" value="ECO:0007669"/>
    <property type="project" value="InterPro"/>
</dbReference>
<dbReference type="CDD" id="cd17790">
    <property type="entry name" value="7tmA_mAChR_M1"/>
    <property type="match status" value="1"/>
</dbReference>
<dbReference type="FunFam" id="1.20.1070.10:FF:000103">
    <property type="entry name" value="Muscarinic acetylcholine receptor"/>
    <property type="match status" value="1"/>
</dbReference>
<dbReference type="FunFam" id="1.20.1070.10:FF:000162">
    <property type="entry name" value="Muscarinic acetylcholine receptor"/>
    <property type="match status" value="1"/>
</dbReference>
<dbReference type="Gene3D" id="1.20.1070.10">
    <property type="entry name" value="Rhodopsin 7-helix transmembrane proteins"/>
    <property type="match status" value="1"/>
</dbReference>
<dbReference type="InterPro" id="IPR000276">
    <property type="entry name" value="GPCR_Rhodpsn"/>
</dbReference>
<dbReference type="InterPro" id="IPR017452">
    <property type="entry name" value="GPCR_Rhodpsn_7TM"/>
</dbReference>
<dbReference type="InterPro" id="IPR002228">
    <property type="entry name" value="Musac_Ach_M1_rcpt"/>
</dbReference>
<dbReference type="InterPro" id="IPR000995">
    <property type="entry name" value="Musac_Ach_rcpt"/>
</dbReference>
<dbReference type="PANTHER" id="PTHR24247">
    <property type="entry name" value="5-HYDROXYTRYPTAMINE RECEPTOR"/>
    <property type="match status" value="1"/>
</dbReference>
<dbReference type="PANTHER" id="PTHR24247:SF182">
    <property type="entry name" value="MUSCARINIC ACETYLCHOLINE RECEPTOR M1"/>
    <property type="match status" value="1"/>
</dbReference>
<dbReference type="Pfam" id="PF00001">
    <property type="entry name" value="7tm_1"/>
    <property type="match status" value="1"/>
</dbReference>
<dbReference type="PRINTS" id="PR00237">
    <property type="entry name" value="GPCRRHODOPSN"/>
</dbReference>
<dbReference type="PRINTS" id="PR00243">
    <property type="entry name" value="MUSCARINICR"/>
</dbReference>
<dbReference type="PRINTS" id="PR00538">
    <property type="entry name" value="MUSCRINICM1R"/>
</dbReference>
<dbReference type="SUPFAM" id="SSF81321">
    <property type="entry name" value="Family A G protein-coupled receptor-like"/>
    <property type="match status" value="1"/>
</dbReference>
<dbReference type="PROSITE" id="PS00237">
    <property type="entry name" value="G_PROTEIN_RECEP_F1_1"/>
    <property type="match status" value="1"/>
</dbReference>
<dbReference type="PROSITE" id="PS50262">
    <property type="entry name" value="G_PROTEIN_RECEP_F1_2"/>
    <property type="match status" value="1"/>
</dbReference>
<feature type="chain" id="PRO_0000069017" description="Muscarinic acetylcholine receptor M1">
    <location>
        <begin position="1"/>
        <end position="460"/>
    </location>
</feature>
<feature type="topological domain" description="Extracellular" evidence="2">
    <location>
        <begin position="1"/>
        <end position="22"/>
    </location>
</feature>
<feature type="transmembrane region" description="Helical; Name=1" evidence="2">
    <location>
        <begin position="23"/>
        <end position="48"/>
    </location>
</feature>
<feature type="topological domain" description="Cytoplasmic" evidence="2">
    <location>
        <begin position="49"/>
        <end position="62"/>
    </location>
</feature>
<feature type="transmembrane region" description="Helical; Name=2" evidence="2">
    <location>
        <begin position="63"/>
        <end position="84"/>
    </location>
</feature>
<feature type="topological domain" description="Extracellular" evidence="2">
    <location>
        <begin position="85"/>
        <end position="95"/>
    </location>
</feature>
<feature type="transmembrane region" description="Helical; Name=3" evidence="2">
    <location>
        <begin position="96"/>
        <end position="121"/>
    </location>
</feature>
<feature type="topological domain" description="Cytoplasmic" evidence="2">
    <location>
        <begin position="122"/>
        <end position="142"/>
    </location>
</feature>
<feature type="transmembrane region" description="Helical; Name=4" evidence="2">
    <location>
        <begin position="143"/>
        <end position="164"/>
    </location>
</feature>
<feature type="topological domain" description="Extracellular" evidence="2">
    <location>
        <begin position="165"/>
        <end position="185"/>
    </location>
</feature>
<feature type="transmembrane region" description="Helical; Name=5" evidence="2">
    <location>
        <begin position="186"/>
        <end position="209"/>
    </location>
</feature>
<feature type="topological domain" description="Cytoplasmic" evidence="2">
    <location>
        <begin position="210"/>
        <end position="366"/>
    </location>
</feature>
<feature type="transmembrane region" description="Helical; Name=6" evidence="2">
    <location>
        <begin position="367"/>
        <end position="390"/>
    </location>
</feature>
<feature type="topological domain" description="Extracellular" evidence="2">
    <location>
        <begin position="391"/>
        <end position="397"/>
    </location>
</feature>
<feature type="transmembrane region" description="Helical; Name=7" evidence="2">
    <location>
        <begin position="398"/>
        <end position="420"/>
    </location>
</feature>
<feature type="topological domain" description="Cytoplasmic" evidence="2">
    <location>
        <begin position="421"/>
        <end position="460"/>
    </location>
</feature>
<feature type="region of interest" description="Disordered" evidence="6">
    <location>
        <begin position="225"/>
        <end position="257"/>
    </location>
</feature>
<feature type="region of interest" description="Disordered" evidence="6">
    <location>
        <begin position="274"/>
        <end position="297"/>
    </location>
</feature>
<feature type="region of interest" description="Disordered" evidence="6">
    <location>
        <begin position="310"/>
        <end position="351"/>
    </location>
</feature>
<feature type="compositionally biased region" description="Low complexity" evidence="6">
    <location>
        <begin position="238"/>
        <end position="257"/>
    </location>
</feature>
<feature type="compositionally biased region" description="Basic residues" evidence="6">
    <location>
        <begin position="328"/>
        <end position="343"/>
    </location>
</feature>
<feature type="modified residue" description="Phosphothreonine" evidence="8">
    <location>
        <position position="230"/>
    </location>
</feature>
<feature type="modified residue" description="Phosphoserine" evidence="1">
    <location>
        <position position="254"/>
    </location>
</feature>
<feature type="modified residue" description="Phosphoserine" evidence="3">
    <location>
        <position position="451"/>
    </location>
</feature>
<feature type="modified residue" description="Phosphothreonine" evidence="3">
    <location>
        <position position="455"/>
    </location>
</feature>
<feature type="modified residue" description="Phosphoserine" evidence="3">
    <location>
        <position position="457"/>
    </location>
</feature>
<feature type="glycosylation site" description="N-linked (GlcNAc...) asparagine" evidence="4">
    <location>
        <position position="2"/>
    </location>
</feature>
<feature type="glycosylation site" description="N-linked (GlcNAc...) asparagine" evidence="4">
    <location>
        <position position="12"/>
    </location>
</feature>
<feature type="disulfide bond" evidence="5">
    <location>
        <begin position="98"/>
        <end position="178"/>
    </location>
</feature>
<feature type="sequence conflict" description="In Ref. 1; AAA37158." evidence="7" ref="1">
    <original>I</original>
    <variation>S</variation>
    <location>
        <position position="30"/>
    </location>
</feature>
<feature type="sequence conflict" description="In Ref. 1; AAA37158." evidence="7" ref="1">
    <original>F</original>
    <variation>I</variation>
    <location>
        <position position="50"/>
    </location>
</feature>
<feature type="sequence conflict" description="In Ref. 1; AAA37158." evidence="7" ref="1">
    <original>L</original>
    <variation>S</variation>
    <location>
        <position position="420"/>
    </location>
</feature>
<feature type="sequence conflict" description="In Ref. 1; AAA37158." evidence="7" ref="1">
    <original>T</original>
    <variation>H</variation>
    <location>
        <position position="428"/>
    </location>
</feature>
<keyword id="KW-1003">Cell membrane</keyword>
<keyword id="KW-1015">Disulfide bond</keyword>
<keyword id="KW-0297">G-protein coupled receptor</keyword>
<keyword id="KW-0325">Glycoprotein</keyword>
<keyword id="KW-0472">Membrane</keyword>
<keyword id="KW-0597">Phosphoprotein</keyword>
<keyword id="KW-0628">Postsynaptic cell membrane</keyword>
<keyword id="KW-0675">Receptor</keyword>
<keyword id="KW-1185">Reference proteome</keyword>
<keyword id="KW-0770">Synapse</keyword>
<keyword id="KW-0807">Transducer</keyword>
<keyword id="KW-0812">Transmembrane</keyword>
<keyword id="KW-1133">Transmembrane helix</keyword>
<reference key="1">
    <citation type="journal article" date="1988" name="J. Biol. Chem.">
        <title>Isolation, sequence, and functional expression of the mouse M1 muscarinic acetylcholine receptor gene.</title>
        <authorList>
            <person name="Shapiro R.A."/>
            <person name="Scherer N.M."/>
            <person name="Habecker B.A."/>
            <person name="Subers E.M."/>
            <person name="Nathanson N.M."/>
        </authorList>
    </citation>
    <scope>NUCLEOTIDE SEQUENCE [GENOMIC DNA]</scope>
</reference>
<reference key="2">
    <citation type="journal article" date="1989" name="J. Biol. Chem.">
        <authorList>
            <person name="Shapiro R.A."/>
            <person name="Scherer N.M."/>
            <person name="Habecker B.A."/>
            <person name="Subers E.M."/>
            <person name="Nathanson N.M."/>
        </authorList>
    </citation>
    <scope>ERRATUM OF PUBMED:2848036</scope>
</reference>
<reference key="3">
    <citation type="journal article" date="2005" name="Science">
        <title>The transcriptional landscape of the mammalian genome.</title>
        <authorList>
            <person name="Carninci P."/>
            <person name="Kasukawa T."/>
            <person name="Katayama S."/>
            <person name="Gough J."/>
            <person name="Frith M.C."/>
            <person name="Maeda N."/>
            <person name="Oyama R."/>
            <person name="Ravasi T."/>
            <person name="Lenhard B."/>
            <person name="Wells C."/>
            <person name="Kodzius R."/>
            <person name="Shimokawa K."/>
            <person name="Bajic V.B."/>
            <person name="Brenner S.E."/>
            <person name="Batalov S."/>
            <person name="Forrest A.R."/>
            <person name="Zavolan M."/>
            <person name="Davis M.J."/>
            <person name="Wilming L.G."/>
            <person name="Aidinis V."/>
            <person name="Allen J.E."/>
            <person name="Ambesi-Impiombato A."/>
            <person name="Apweiler R."/>
            <person name="Aturaliya R.N."/>
            <person name="Bailey T.L."/>
            <person name="Bansal M."/>
            <person name="Baxter L."/>
            <person name="Beisel K.W."/>
            <person name="Bersano T."/>
            <person name="Bono H."/>
            <person name="Chalk A.M."/>
            <person name="Chiu K.P."/>
            <person name="Choudhary V."/>
            <person name="Christoffels A."/>
            <person name="Clutterbuck D.R."/>
            <person name="Crowe M.L."/>
            <person name="Dalla E."/>
            <person name="Dalrymple B.P."/>
            <person name="de Bono B."/>
            <person name="Della Gatta G."/>
            <person name="di Bernardo D."/>
            <person name="Down T."/>
            <person name="Engstrom P."/>
            <person name="Fagiolini M."/>
            <person name="Faulkner G."/>
            <person name="Fletcher C.F."/>
            <person name="Fukushima T."/>
            <person name="Furuno M."/>
            <person name="Futaki S."/>
            <person name="Gariboldi M."/>
            <person name="Georgii-Hemming P."/>
            <person name="Gingeras T.R."/>
            <person name="Gojobori T."/>
            <person name="Green R.E."/>
            <person name="Gustincich S."/>
            <person name="Harbers M."/>
            <person name="Hayashi Y."/>
            <person name="Hensch T.K."/>
            <person name="Hirokawa N."/>
            <person name="Hill D."/>
            <person name="Huminiecki L."/>
            <person name="Iacono M."/>
            <person name="Ikeo K."/>
            <person name="Iwama A."/>
            <person name="Ishikawa T."/>
            <person name="Jakt M."/>
            <person name="Kanapin A."/>
            <person name="Katoh M."/>
            <person name="Kawasawa Y."/>
            <person name="Kelso J."/>
            <person name="Kitamura H."/>
            <person name="Kitano H."/>
            <person name="Kollias G."/>
            <person name="Krishnan S.P."/>
            <person name="Kruger A."/>
            <person name="Kummerfeld S.K."/>
            <person name="Kurochkin I.V."/>
            <person name="Lareau L.F."/>
            <person name="Lazarevic D."/>
            <person name="Lipovich L."/>
            <person name="Liu J."/>
            <person name="Liuni S."/>
            <person name="McWilliam S."/>
            <person name="Madan Babu M."/>
            <person name="Madera M."/>
            <person name="Marchionni L."/>
            <person name="Matsuda H."/>
            <person name="Matsuzawa S."/>
            <person name="Miki H."/>
            <person name="Mignone F."/>
            <person name="Miyake S."/>
            <person name="Morris K."/>
            <person name="Mottagui-Tabar S."/>
            <person name="Mulder N."/>
            <person name="Nakano N."/>
            <person name="Nakauchi H."/>
            <person name="Ng P."/>
            <person name="Nilsson R."/>
            <person name="Nishiguchi S."/>
            <person name="Nishikawa S."/>
            <person name="Nori F."/>
            <person name="Ohara O."/>
            <person name="Okazaki Y."/>
            <person name="Orlando V."/>
            <person name="Pang K.C."/>
            <person name="Pavan W.J."/>
            <person name="Pavesi G."/>
            <person name="Pesole G."/>
            <person name="Petrovsky N."/>
            <person name="Piazza S."/>
            <person name="Reed J."/>
            <person name="Reid J.F."/>
            <person name="Ring B.Z."/>
            <person name="Ringwald M."/>
            <person name="Rost B."/>
            <person name="Ruan Y."/>
            <person name="Salzberg S.L."/>
            <person name="Sandelin A."/>
            <person name="Schneider C."/>
            <person name="Schoenbach C."/>
            <person name="Sekiguchi K."/>
            <person name="Semple C.A."/>
            <person name="Seno S."/>
            <person name="Sessa L."/>
            <person name="Sheng Y."/>
            <person name="Shibata Y."/>
            <person name="Shimada H."/>
            <person name="Shimada K."/>
            <person name="Silva D."/>
            <person name="Sinclair B."/>
            <person name="Sperling S."/>
            <person name="Stupka E."/>
            <person name="Sugiura K."/>
            <person name="Sultana R."/>
            <person name="Takenaka Y."/>
            <person name="Taki K."/>
            <person name="Tammoja K."/>
            <person name="Tan S.L."/>
            <person name="Tang S."/>
            <person name="Taylor M.S."/>
            <person name="Tegner J."/>
            <person name="Teichmann S.A."/>
            <person name="Ueda H.R."/>
            <person name="van Nimwegen E."/>
            <person name="Verardo R."/>
            <person name="Wei C.L."/>
            <person name="Yagi K."/>
            <person name="Yamanishi H."/>
            <person name="Zabarovsky E."/>
            <person name="Zhu S."/>
            <person name="Zimmer A."/>
            <person name="Hide W."/>
            <person name="Bult C."/>
            <person name="Grimmond S.M."/>
            <person name="Teasdale R.D."/>
            <person name="Liu E.T."/>
            <person name="Brusic V."/>
            <person name="Quackenbush J."/>
            <person name="Wahlestedt C."/>
            <person name="Mattick J.S."/>
            <person name="Hume D.A."/>
            <person name="Kai C."/>
            <person name="Sasaki D."/>
            <person name="Tomaru Y."/>
            <person name="Fukuda S."/>
            <person name="Kanamori-Katayama M."/>
            <person name="Suzuki M."/>
            <person name="Aoki J."/>
            <person name="Arakawa T."/>
            <person name="Iida J."/>
            <person name="Imamura K."/>
            <person name="Itoh M."/>
            <person name="Kato T."/>
            <person name="Kawaji H."/>
            <person name="Kawagashira N."/>
            <person name="Kawashima T."/>
            <person name="Kojima M."/>
            <person name="Kondo S."/>
            <person name="Konno H."/>
            <person name="Nakano K."/>
            <person name="Ninomiya N."/>
            <person name="Nishio T."/>
            <person name="Okada M."/>
            <person name="Plessy C."/>
            <person name="Shibata K."/>
            <person name="Shiraki T."/>
            <person name="Suzuki S."/>
            <person name="Tagami M."/>
            <person name="Waki K."/>
            <person name="Watahiki A."/>
            <person name="Okamura-Oho Y."/>
            <person name="Suzuki H."/>
            <person name="Kawai J."/>
            <person name="Hayashizaki Y."/>
        </authorList>
    </citation>
    <scope>NUCLEOTIDE SEQUENCE [LARGE SCALE MRNA]</scope>
    <source>
        <strain>C57BL/6J</strain>
        <tissue>Corpus striatum</tissue>
        <tissue>Hypothalamus</tissue>
    </source>
</reference>
<reference key="4">
    <citation type="journal article" date="2009" name="PLoS Biol.">
        <title>Lineage-specific biology revealed by a finished genome assembly of the mouse.</title>
        <authorList>
            <person name="Church D.M."/>
            <person name="Goodstadt L."/>
            <person name="Hillier L.W."/>
            <person name="Zody M.C."/>
            <person name="Goldstein S."/>
            <person name="She X."/>
            <person name="Bult C.J."/>
            <person name="Agarwala R."/>
            <person name="Cherry J.L."/>
            <person name="DiCuccio M."/>
            <person name="Hlavina W."/>
            <person name="Kapustin Y."/>
            <person name="Meric P."/>
            <person name="Maglott D."/>
            <person name="Birtle Z."/>
            <person name="Marques A.C."/>
            <person name="Graves T."/>
            <person name="Zhou S."/>
            <person name="Teague B."/>
            <person name="Potamousis K."/>
            <person name="Churas C."/>
            <person name="Place M."/>
            <person name="Herschleb J."/>
            <person name="Runnheim R."/>
            <person name="Forrest D."/>
            <person name="Amos-Landgraf J."/>
            <person name="Schwartz D.C."/>
            <person name="Cheng Z."/>
            <person name="Lindblad-Toh K."/>
            <person name="Eichler E.E."/>
            <person name="Ponting C.P."/>
        </authorList>
    </citation>
    <scope>NUCLEOTIDE SEQUENCE [LARGE SCALE GENOMIC DNA]</scope>
    <source>
        <strain>C57BL/6J</strain>
    </source>
</reference>
<reference key="5">
    <citation type="submission" date="2005-07" db="EMBL/GenBank/DDBJ databases">
        <authorList>
            <person name="Mural R.J."/>
            <person name="Adams M.D."/>
            <person name="Myers E.W."/>
            <person name="Smith H.O."/>
            <person name="Venter J.C."/>
        </authorList>
    </citation>
    <scope>NUCLEOTIDE SEQUENCE [LARGE SCALE GENOMIC DNA]</scope>
</reference>
<reference key="6">
    <citation type="journal article" date="2004" name="Genome Res.">
        <title>The status, quality, and expansion of the NIH full-length cDNA project: the Mammalian Gene Collection (MGC).</title>
        <authorList>
            <consortium name="The MGC Project Team"/>
        </authorList>
    </citation>
    <scope>NUCLEOTIDE SEQUENCE [LARGE SCALE MRNA]</scope>
    <source>
        <strain>C57BL/6J</strain>
        <tissue>Brain</tissue>
    </source>
</reference>
<reference key="7">
    <citation type="journal article" date="2010" name="Cell">
        <title>A tissue-specific atlas of mouse protein phosphorylation and expression.</title>
        <authorList>
            <person name="Huttlin E.L."/>
            <person name="Jedrychowski M.P."/>
            <person name="Elias J.E."/>
            <person name="Goswami T."/>
            <person name="Rad R."/>
            <person name="Beausoleil S.A."/>
            <person name="Villen J."/>
            <person name="Haas W."/>
            <person name="Sowa M.E."/>
            <person name="Gygi S.P."/>
        </authorList>
    </citation>
    <scope>PHOSPHORYLATION [LARGE SCALE ANALYSIS] AT THR-230</scope>
    <scope>IDENTIFICATION BY MASS SPECTROMETRY [LARGE SCALE ANALYSIS]</scope>
    <source>
        <tissue>Brain</tissue>
    </source>
</reference>